<reference key="1">
    <citation type="journal article" date="2004" name="Nat. Genet.">
        <title>Comparison of genome degradation in Paratyphi A and Typhi, human-restricted serovars of Salmonella enterica that cause typhoid.</title>
        <authorList>
            <person name="McClelland M."/>
            <person name="Sanderson K.E."/>
            <person name="Clifton S.W."/>
            <person name="Latreille P."/>
            <person name="Porwollik S."/>
            <person name="Sabo A."/>
            <person name="Meyer R."/>
            <person name="Bieri T."/>
            <person name="Ozersky P."/>
            <person name="McLellan M."/>
            <person name="Harkins C.R."/>
            <person name="Wang C."/>
            <person name="Nguyen C."/>
            <person name="Berghoff A."/>
            <person name="Elliott G."/>
            <person name="Kohlberg S."/>
            <person name="Strong C."/>
            <person name="Du F."/>
            <person name="Carter J."/>
            <person name="Kremizki C."/>
            <person name="Layman D."/>
            <person name="Leonard S."/>
            <person name="Sun H."/>
            <person name="Fulton L."/>
            <person name="Nash W."/>
            <person name="Miner T."/>
            <person name="Minx P."/>
            <person name="Delehaunty K."/>
            <person name="Fronick C."/>
            <person name="Magrini V."/>
            <person name="Nhan M."/>
            <person name="Warren W."/>
            <person name="Florea L."/>
            <person name="Spieth J."/>
            <person name="Wilson R.K."/>
        </authorList>
    </citation>
    <scope>NUCLEOTIDE SEQUENCE [LARGE SCALE GENOMIC DNA]</scope>
    <source>
        <strain>ATCC 9150 / SARB42</strain>
    </source>
</reference>
<accession>Q5PG52</accession>
<organism>
    <name type="scientific">Salmonella paratyphi A (strain ATCC 9150 / SARB42)</name>
    <dbReference type="NCBI Taxonomy" id="295319"/>
    <lineage>
        <taxon>Bacteria</taxon>
        <taxon>Pseudomonadati</taxon>
        <taxon>Pseudomonadota</taxon>
        <taxon>Gammaproteobacteria</taxon>
        <taxon>Enterobacterales</taxon>
        <taxon>Enterobacteriaceae</taxon>
        <taxon>Salmonella</taxon>
    </lineage>
</organism>
<gene>
    <name evidence="1" type="primary">uvrB</name>
    <name type="ordered locus">SPA1954</name>
</gene>
<evidence type="ECO:0000255" key="1">
    <source>
        <dbReference type="HAMAP-Rule" id="MF_00204"/>
    </source>
</evidence>
<comment type="function">
    <text evidence="1">The UvrABC repair system catalyzes the recognition and processing of DNA lesions. A damage recognition complex composed of 2 UvrA and 2 UvrB subunits scans DNA for abnormalities. Upon binding of the UvrA(2)B(2) complex to a putative damaged site, the DNA wraps around one UvrB monomer. DNA wrap is dependent on ATP binding by UvrB and probably causes local melting of the DNA helix, facilitating insertion of UvrB beta-hairpin between the DNA strands. Then UvrB probes one DNA strand for the presence of a lesion. If a lesion is found the UvrA subunits dissociate and the UvrB-DNA preincision complex is formed. This complex is subsequently bound by UvrC and the second UvrB is released. If no lesion is found, the DNA wraps around the other UvrB subunit that will check the other stand for damage.</text>
</comment>
<comment type="subunit">
    <text evidence="1">Forms a heterotetramer with UvrA during the search for lesions. Interacts with UvrC in an incision complex.</text>
</comment>
<comment type="subcellular location">
    <subcellularLocation>
        <location evidence="1">Cytoplasm</location>
    </subcellularLocation>
</comment>
<comment type="domain">
    <text evidence="1">The beta-hairpin motif is involved in DNA binding.</text>
</comment>
<comment type="similarity">
    <text evidence="1">Belongs to the UvrB family.</text>
</comment>
<dbReference type="EMBL" id="CP000026">
    <property type="protein sequence ID" value="AAV77863.1"/>
    <property type="molecule type" value="Genomic_DNA"/>
</dbReference>
<dbReference type="RefSeq" id="WP_000042494.1">
    <property type="nucleotide sequence ID" value="NC_006511.1"/>
</dbReference>
<dbReference type="SMR" id="Q5PG52"/>
<dbReference type="KEGG" id="spt:SPA1954"/>
<dbReference type="HOGENOM" id="CLU_009621_2_1_6"/>
<dbReference type="Proteomes" id="UP000008185">
    <property type="component" value="Chromosome"/>
</dbReference>
<dbReference type="GO" id="GO:0005737">
    <property type="term" value="C:cytoplasm"/>
    <property type="evidence" value="ECO:0007669"/>
    <property type="project" value="UniProtKB-SubCell"/>
</dbReference>
<dbReference type="GO" id="GO:0009380">
    <property type="term" value="C:excinuclease repair complex"/>
    <property type="evidence" value="ECO:0007669"/>
    <property type="project" value="InterPro"/>
</dbReference>
<dbReference type="GO" id="GO:0005524">
    <property type="term" value="F:ATP binding"/>
    <property type="evidence" value="ECO:0007669"/>
    <property type="project" value="UniProtKB-UniRule"/>
</dbReference>
<dbReference type="GO" id="GO:0016887">
    <property type="term" value="F:ATP hydrolysis activity"/>
    <property type="evidence" value="ECO:0007669"/>
    <property type="project" value="InterPro"/>
</dbReference>
<dbReference type="GO" id="GO:0003677">
    <property type="term" value="F:DNA binding"/>
    <property type="evidence" value="ECO:0007669"/>
    <property type="project" value="UniProtKB-UniRule"/>
</dbReference>
<dbReference type="GO" id="GO:0009381">
    <property type="term" value="F:excinuclease ABC activity"/>
    <property type="evidence" value="ECO:0007669"/>
    <property type="project" value="UniProtKB-UniRule"/>
</dbReference>
<dbReference type="GO" id="GO:0006289">
    <property type="term" value="P:nucleotide-excision repair"/>
    <property type="evidence" value="ECO:0007669"/>
    <property type="project" value="UniProtKB-UniRule"/>
</dbReference>
<dbReference type="GO" id="GO:0009432">
    <property type="term" value="P:SOS response"/>
    <property type="evidence" value="ECO:0007669"/>
    <property type="project" value="UniProtKB-UniRule"/>
</dbReference>
<dbReference type="CDD" id="cd17916">
    <property type="entry name" value="DEXHc_UvrB"/>
    <property type="match status" value="1"/>
</dbReference>
<dbReference type="CDD" id="cd18790">
    <property type="entry name" value="SF2_C_UvrB"/>
    <property type="match status" value="1"/>
</dbReference>
<dbReference type="FunFam" id="3.40.50.300:FF:000257">
    <property type="entry name" value="UvrABC system protein B"/>
    <property type="match status" value="1"/>
</dbReference>
<dbReference type="FunFam" id="3.40.50.300:FF:000401">
    <property type="entry name" value="UvrABC system protein B"/>
    <property type="match status" value="1"/>
</dbReference>
<dbReference type="FunFam" id="3.40.50.300:FF:000477">
    <property type="entry name" value="UvrABC system protein B"/>
    <property type="match status" value="1"/>
</dbReference>
<dbReference type="Gene3D" id="6.10.140.240">
    <property type="match status" value="1"/>
</dbReference>
<dbReference type="Gene3D" id="3.40.50.300">
    <property type="entry name" value="P-loop containing nucleotide triphosphate hydrolases"/>
    <property type="match status" value="3"/>
</dbReference>
<dbReference type="Gene3D" id="4.10.860.10">
    <property type="entry name" value="UVR domain"/>
    <property type="match status" value="1"/>
</dbReference>
<dbReference type="HAMAP" id="MF_00204">
    <property type="entry name" value="UvrB"/>
    <property type="match status" value="1"/>
</dbReference>
<dbReference type="InterPro" id="IPR006935">
    <property type="entry name" value="Helicase/UvrB_N"/>
</dbReference>
<dbReference type="InterPro" id="IPR014001">
    <property type="entry name" value="Helicase_ATP-bd"/>
</dbReference>
<dbReference type="InterPro" id="IPR001650">
    <property type="entry name" value="Helicase_C-like"/>
</dbReference>
<dbReference type="InterPro" id="IPR027417">
    <property type="entry name" value="P-loop_NTPase"/>
</dbReference>
<dbReference type="InterPro" id="IPR001943">
    <property type="entry name" value="UVR_dom"/>
</dbReference>
<dbReference type="InterPro" id="IPR036876">
    <property type="entry name" value="UVR_dom_sf"/>
</dbReference>
<dbReference type="InterPro" id="IPR004807">
    <property type="entry name" value="UvrB"/>
</dbReference>
<dbReference type="InterPro" id="IPR041471">
    <property type="entry name" value="UvrB_inter"/>
</dbReference>
<dbReference type="InterPro" id="IPR024759">
    <property type="entry name" value="UvrB_YAD/RRR_dom"/>
</dbReference>
<dbReference type="NCBIfam" id="NF003673">
    <property type="entry name" value="PRK05298.1"/>
    <property type="match status" value="1"/>
</dbReference>
<dbReference type="NCBIfam" id="TIGR00631">
    <property type="entry name" value="uvrb"/>
    <property type="match status" value="1"/>
</dbReference>
<dbReference type="PANTHER" id="PTHR24029">
    <property type="entry name" value="UVRABC SYSTEM PROTEIN B"/>
    <property type="match status" value="1"/>
</dbReference>
<dbReference type="PANTHER" id="PTHR24029:SF0">
    <property type="entry name" value="UVRABC SYSTEM PROTEIN B"/>
    <property type="match status" value="1"/>
</dbReference>
<dbReference type="Pfam" id="PF00271">
    <property type="entry name" value="Helicase_C"/>
    <property type="match status" value="1"/>
</dbReference>
<dbReference type="Pfam" id="PF04851">
    <property type="entry name" value="ResIII"/>
    <property type="match status" value="1"/>
</dbReference>
<dbReference type="Pfam" id="PF02151">
    <property type="entry name" value="UVR"/>
    <property type="match status" value="1"/>
</dbReference>
<dbReference type="Pfam" id="PF12344">
    <property type="entry name" value="UvrB"/>
    <property type="match status" value="1"/>
</dbReference>
<dbReference type="Pfam" id="PF17757">
    <property type="entry name" value="UvrB_inter"/>
    <property type="match status" value="1"/>
</dbReference>
<dbReference type="SMART" id="SM00487">
    <property type="entry name" value="DEXDc"/>
    <property type="match status" value="1"/>
</dbReference>
<dbReference type="SMART" id="SM00490">
    <property type="entry name" value="HELICc"/>
    <property type="match status" value="1"/>
</dbReference>
<dbReference type="SUPFAM" id="SSF46600">
    <property type="entry name" value="C-terminal UvrC-binding domain of UvrB"/>
    <property type="match status" value="1"/>
</dbReference>
<dbReference type="SUPFAM" id="SSF52540">
    <property type="entry name" value="P-loop containing nucleoside triphosphate hydrolases"/>
    <property type="match status" value="2"/>
</dbReference>
<dbReference type="PROSITE" id="PS51192">
    <property type="entry name" value="HELICASE_ATP_BIND_1"/>
    <property type="match status" value="1"/>
</dbReference>
<dbReference type="PROSITE" id="PS51194">
    <property type="entry name" value="HELICASE_CTER"/>
    <property type="match status" value="1"/>
</dbReference>
<dbReference type="PROSITE" id="PS50151">
    <property type="entry name" value="UVR"/>
    <property type="match status" value="1"/>
</dbReference>
<feature type="chain" id="PRO_0000227358" description="UvrABC system protein B">
    <location>
        <begin position="1"/>
        <end position="673"/>
    </location>
</feature>
<feature type="domain" description="Helicase ATP-binding" evidence="1">
    <location>
        <begin position="26"/>
        <end position="414"/>
    </location>
</feature>
<feature type="domain" description="Helicase C-terminal" evidence="1">
    <location>
        <begin position="431"/>
        <end position="597"/>
    </location>
</feature>
<feature type="domain" description="UVR" evidence="1">
    <location>
        <begin position="633"/>
        <end position="668"/>
    </location>
</feature>
<feature type="short sequence motif" description="Beta-hairpin">
    <location>
        <begin position="92"/>
        <end position="115"/>
    </location>
</feature>
<feature type="binding site" evidence="1">
    <location>
        <begin position="39"/>
        <end position="46"/>
    </location>
    <ligand>
        <name>ATP</name>
        <dbReference type="ChEBI" id="CHEBI:30616"/>
    </ligand>
</feature>
<proteinExistence type="inferred from homology"/>
<sequence length="673" mass="76149">MSKPFKLNSAFKPSGDQPDAIRRLEEGLEDGLAHQTLLGVTGSGKTFTIANVIADLQRPTMVLAPNKTLAAQLYGEMKEFFPENAVEYFVSYYDYYQPEAYVPSSDTFIEKDASINEHIEQMRLSATKALLERRDVVVVASVSAIYGLGDPDLYLKMMLHLTVGMLIDQRAILRRLAELQYTRNDQAFQRGTFRVRGEVIDIFPAESDDIALRVELFDEEVERLSLFDPLTGQVESTVPRYTIYPKTHYVTPRERILQAMEEIKDELADRRKVLLANNKLLEEQRLSQRTQFDLEMMNELGYCSGIENYSRFLSGRGPGEPPPTLFDYLPADGLLVVDESHVTIPQIGGMYRGDRARKETLVEYGFRLPSALDNRPLKFEEFEALAPQTIYVSATPGNYELEKSGDEVVDQVVRPTGLLDPIIEVRPVATQVDDLLSEIRQRAAINERVLVTTLTKRMAEDLTEYLEEHGERVRYLHSDIDTVERMEIIRDLRLGEFDVLVGINLLREGLDMPEVSLVAILDADKEGFLRSERSLIQTIGRAARNVNGKAILYGDKITPSMAKAIGETERRREKQQKYNEEHGITPQGLNKKVVDILALGQNIAKTKAKGKGKGRSTAKAGIVELDMTPKALQQKIHELEGQMMQHAQNLEFEEAAQIRDQLHQLRELFIAAS</sequence>
<protein>
    <recommendedName>
        <fullName evidence="1">UvrABC system protein B</fullName>
        <shortName evidence="1">Protein UvrB</shortName>
    </recommendedName>
    <alternativeName>
        <fullName evidence="1">Excinuclease ABC subunit B</fullName>
    </alternativeName>
</protein>
<keyword id="KW-0067">ATP-binding</keyword>
<keyword id="KW-0963">Cytoplasm</keyword>
<keyword id="KW-0227">DNA damage</keyword>
<keyword id="KW-0228">DNA excision</keyword>
<keyword id="KW-0234">DNA repair</keyword>
<keyword id="KW-0267">Excision nuclease</keyword>
<keyword id="KW-0547">Nucleotide-binding</keyword>
<keyword id="KW-0742">SOS response</keyword>
<name>UVRB_SALPA</name>